<accession>Q8X082</accession>
<accession>Q7SCB8</accession>
<proteinExistence type="inferred from homology"/>
<reference key="1">
    <citation type="journal article" date="2003" name="Nucleic Acids Res.">
        <title>What's in the genome of a filamentous fungus? Analysis of the Neurospora genome sequence.</title>
        <authorList>
            <person name="Mannhaupt G."/>
            <person name="Montrone C."/>
            <person name="Haase D."/>
            <person name="Mewes H.-W."/>
            <person name="Aign V."/>
            <person name="Hoheisel J.D."/>
            <person name="Fartmann B."/>
            <person name="Nyakatura G."/>
            <person name="Kempken F."/>
            <person name="Maier J."/>
            <person name="Schulte U."/>
        </authorList>
    </citation>
    <scope>NUCLEOTIDE SEQUENCE [LARGE SCALE GENOMIC DNA]</scope>
    <source>
        <strain>ATCC 24698 / 74-OR23-1A / CBS 708.71 / DSM 1257 / FGSC 987</strain>
    </source>
</reference>
<reference key="2">
    <citation type="journal article" date="2003" name="Nature">
        <title>The genome sequence of the filamentous fungus Neurospora crassa.</title>
        <authorList>
            <person name="Galagan J.E."/>
            <person name="Calvo S.E."/>
            <person name="Borkovich K.A."/>
            <person name="Selker E.U."/>
            <person name="Read N.D."/>
            <person name="Jaffe D.B."/>
            <person name="FitzHugh W."/>
            <person name="Ma L.-J."/>
            <person name="Smirnov S."/>
            <person name="Purcell S."/>
            <person name="Rehman B."/>
            <person name="Elkins T."/>
            <person name="Engels R."/>
            <person name="Wang S."/>
            <person name="Nielsen C.B."/>
            <person name="Butler J."/>
            <person name="Endrizzi M."/>
            <person name="Qui D."/>
            <person name="Ianakiev P."/>
            <person name="Bell-Pedersen D."/>
            <person name="Nelson M.A."/>
            <person name="Werner-Washburne M."/>
            <person name="Selitrennikoff C.P."/>
            <person name="Kinsey J.A."/>
            <person name="Braun E.L."/>
            <person name="Zelter A."/>
            <person name="Schulte U."/>
            <person name="Kothe G.O."/>
            <person name="Jedd G."/>
            <person name="Mewes H.-W."/>
            <person name="Staben C."/>
            <person name="Marcotte E."/>
            <person name="Greenberg D."/>
            <person name="Roy A."/>
            <person name="Foley K."/>
            <person name="Naylor J."/>
            <person name="Stange-Thomann N."/>
            <person name="Barrett R."/>
            <person name="Gnerre S."/>
            <person name="Kamal M."/>
            <person name="Kamvysselis M."/>
            <person name="Mauceli E.W."/>
            <person name="Bielke C."/>
            <person name="Rudd S."/>
            <person name="Frishman D."/>
            <person name="Krystofova S."/>
            <person name="Rasmussen C."/>
            <person name="Metzenberg R.L."/>
            <person name="Perkins D.D."/>
            <person name="Kroken S."/>
            <person name="Cogoni C."/>
            <person name="Macino G."/>
            <person name="Catcheside D.E.A."/>
            <person name="Li W."/>
            <person name="Pratt R.J."/>
            <person name="Osmani S.A."/>
            <person name="DeSouza C.P.C."/>
            <person name="Glass N.L."/>
            <person name="Orbach M.J."/>
            <person name="Berglund J.A."/>
            <person name="Voelker R."/>
            <person name="Yarden O."/>
            <person name="Plamann M."/>
            <person name="Seiler S."/>
            <person name="Dunlap J.C."/>
            <person name="Radford A."/>
            <person name="Aramayo R."/>
            <person name="Natvig D.O."/>
            <person name="Alex L.A."/>
            <person name="Mannhaupt G."/>
            <person name="Ebbole D.J."/>
            <person name="Freitag M."/>
            <person name="Paulsen I."/>
            <person name="Sachs M.S."/>
            <person name="Lander E.S."/>
            <person name="Nusbaum C."/>
            <person name="Birren B.W."/>
        </authorList>
    </citation>
    <scope>NUCLEOTIDE SEQUENCE [LARGE SCALE GENOMIC DNA]</scope>
    <source>
        <strain>ATCC 24698 / 74-OR23-1A / CBS 708.71 / DSM 1257 / FGSC 987</strain>
    </source>
</reference>
<organism>
    <name type="scientific">Neurospora crassa (strain ATCC 24698 / 74-OR23-1A / CBS 708.71 / DSM 1257 / FGSC 987)</name>
    <dbReference type="NCBI Taxonomy" id="367110"/>
    <lineage>
        <taxon>Eukaryota</taxon>
        <taxon>Fungi</taxon>
        <taxon>Dikarya</taxon>
        <taxon>Ascomycota</taxon>
        <taxon>Pezizomycotina</taxon>
        <taxon>Sordariomycetes</taxon>
        <taxon>Sordariomycetidae</taxon>
        <taxon>Sordariales</taxon>
        <taxon>Sordariaceae</taxon>
        <taxon>Neurospora</taxon>
    </lineage>
</organism>
<name>RFC5_NEUCR</name>
<feature type="chain" id="PRO_0000121763" description="Replication factor C subunit 5">
    <location>
        <begin position="1"/>
        <end position="352"/>
    </location>
</feature>
<comment type="function">
    <text evidence="1">The elongation of primed DNA templates by DNA polymerase delta and epsilon requires the action of the accessory proteins proliferating cell nuclear antigen (PCNA) and activator 1.</text>
</comment>
<comment type="subunit">
    <text evidence="1">Heteropentamer of subunits rfc1, rfc2, rfc3, rfc4 and rfc5 that forms a complex with PCNA in the presence of ATP.</text>
</comment>
<comment type="subcellular location">
    <subcellularLocation>
        <location evidence="1">Nucleus</location>
    </subcellularLocation>
</comment>
<comment type="similarity">
    <text evidence="2">Belongs to the activator 1 small subunits family.</text>
</comment>
<gene>
    <name type="ORF">B14D6.460</name>
    <name type="ORF">NCU06769</name>
</gene>
<sequence length="352" mass="39921">MALIVDKHRPRSLDALTYHTELSERLRSLAQSGDFPHLLVYGPSGAGKKTRIVATLKELYGPGVEKIKIDARVFQTSSNRKLEFNIVASVYHLEITPSDVGNYDRVVVQDLLKEVAQTQQVDLSAKQRFKVVVINEADHLTRDAQAALRRTMEKYSPNLRLILLANSTANIIAPIRSRCLLVRVAAPTHKEICDVLASSAKKEGWPIVKGLHQRIAEESGRNLRRALLMYEAVYAQNEKVTDSTPIPPPDWEALIGQIAKEIMEEHTPARILQVRAKLYDLLTHCIPATIILKTLTFKLIPLIDDALKADVIYWSAFYEHRIRTGTKVIFHLEAFVAKFMRIFEMYLMSMDL</sequence>
<protein>
    <recommendedName>
        <fullName>Replication factor C subunit 5</fullName>
        <shortName>Replication factor C5</shortName>
    </recommendedName>
    <alternativeName>
        <fullName>Probable activator 1 subunit 5</fullName>
    </alternativeName>
</protein>
<dbReference type="EMBL" id="AL356173">
    <property type="protein sequence ID" value="CAB91755.2"/>
    <property type="molecule type" value="Genomic_DNA"/>
</dbReference>
<dbReference type="EMBL" id="CM002237">
    <property type="protein sequence ID" value="EAA34305.1"/>
    <property type="molecule type" value="Genomic_DNA"/>
</dbReference>
<dbReference type="RefSeq" id="XP_963541.1">
    <property type="nucleotide sequence ID" value="XM_958448.2"/>
</dbReference>
<dbReference type="SMR" id="Q8X082"/>
<dbReference type="FunCoup" id="Q8X082">
    <property type="interactions" value="810"/>
</dbReference>
<dbReference type="STRING" id="367110.Q8X082"/>
<dbReference type="PaxDb" id="5141-EFNCRP00000006881"/>
<dbReference type="EnsemblFungi" id="EAA34305">
    <property type="protein sequence ID" value="EAA34305"/>
    <property type="gene ID" value="NCU06769"/>
</dbReference>
<dbReference type="GeneID" id="3879665"/>
<dbReference type="KEGG" id="ncr:NCU06769"/>
<dbReference type="VEuPathDB" id="FungiDB:NCU06769"/>
<dbReference type="HOGENOM" id="CLU_042324_5_0_1"/>
<dbReference type="InParanoid" id="Q8X082"/>
<dbReference type="OMA" id="LKADIMH"/>
<dbReference type="OrthoDB" id="761538at2759"/>
<dbReference type="Proteomes" id="UP000001805">
    <property type="component" value="Chromosome 6, Linkage Group II"/>
</dbReference>
<dbReference type="GO" id="GO:0031390">
    <property type="term" value="C:Ctf18 RFC-like complex"/>
    <property type="evidence" value="ECO:0000318"/>
    <property type="project" value="GO_Central"/>
</dbReference>
<dbReference type="GO" id="GO:0005663">
    <property type="term" value="C:DNA replication factor C complex"/>
    <property type="evidence" value="ECO:0000318"/>
    <property type="project" value="GO_Central"/>
</dbReference>
<dbReference type="GO" id="GO:0031391">
    <property type="term" value="C:Elg1 RFC-like complex"/>
    <property type="evidence" value="ECO:0000318"/>
    <property type="project" value="GO_Central"/>
</dbReference>
<dbReference type="GO" id="GO:0005634">
    <property type="term" value="C:nucleus"/>
    <property type="evidence" value="ECO:0000318"/>
    <property type="project" value="GO_Central"/>
</dbReference>
<dbReference type="GO" id="GO:0031389">
    <property type="term" value="C:Rad17 RFC-like complex"/>
    <property type="evidence" value="ECO:0000318"/>
    <property type="project" value="GO_Central"/>
</dbReference>
<dbReference type="GO" id="GO:0016887">
    <property type="term" value="F:ATP hydrolysis activity"/>
    <property type="evidence" value="ECO:0007669"/>
    <property type="project" value="InterPro"/>
</dbReference>
<dbReference type="GO" id="GO:0003677">
    <property type="term" value="F:DNA binding"/>
    <property type="evidence" value="ECO:0007669"/>
    <property type="project" value="UniProtKB-KW"/>
</dbReference>
<dbReference type="GO" id="GO:0003689">
    <property type="term" value="F:DNA clamp loader activity"/>
    <property type="evidence" value="ECO:0007669"/>
    <property type="project" value="EnsemblFungi"/>
</dbReference>
<dbReference type="GO" id="GO:0006281">
    <property type="term" value="P:DNA repair"/>
    <property type="evidence" value="ECO:0000318"/>
    <property type="project" value="GO_Central"/>
</dbReference>
<dbReference type="GO" id="GO:1902983">
    <property type="term" value="P:DNA strand elongation involved in mitotic DNA replication"/>
    <property type="evidence" value="ECO:0007669"/>
    <property type="project" value="EnsemblFungi"/>
</dbReference>
<dbReference type="GO" id="GO:0006261">
    <property type="term" value="P:DNA-templated DNA replication"/>
    <property type="evidence" value="ECO:0000318"/>
    <property type="project" value="GO_Central"/>
</dbReference>
<dbReference type="GO" id="GO:0006272">
    <property type="term" value="P:leading strand elongation"/>
    <property type="evidence" value="ECO:0007669"/>
    <property type="project" value="EnsemblFungi"/>
</dbReference>
<dbReference type="GO" id="GO:0007062">
    <property type="term" value="P:sister chromatid cohesion"/>
    <property type="evidence" value="ECO:0007669"/>
    <property type="project" value="EnsemblFungi"/>
</dbReference>
<dbReference type="GO" id="GO:0070914">
    <property type="term" value="P:UV-damage excision repair"/>
    <property type="evidence" value="ECO:0007669"/>
    <property type="project" value="EnsemblFungi"/>
</dbReference>
<dbReference type="CDD" id="cd00009">
    <property type="entry name" value="AAA"/>
    <property type="match status" value="1"/>
</dbReference>
<dbReference type="FunFam" id="1.20.272.10:FF:000002">
    <property type="entry name" value="Replication factor C subunit 3"/>
    <property type="match status" value="1"/>
</dbReference>
<dbReference type="FunFam" id="1.10.8.60:FF:000030">
    <property type="entry name" value="replication factor C subunit 3"/>
    <property type="match status" value="1"/>
</dbReference>
<dbReference type="FunFam" id="3.40.50.300:FF:000136">
    <property type="entry name" value="Replication factor C subunit 5"/>
    <property type="match status" value="1"/>
</dbReference>
<dbReference type="Gene3D" id="1.10.8.60">
    <property type="match status" value="1"/>
</dbReference>
<dbReference type="Gene3D" id="1.20.272.10">
    <property type="match status" value="1"/>
</dbReference>
<dbReference type="Gene3D" id="3.40.50.300">
    <property type="entry name" value="P-loop containing nucleotide triphosphate hydrolases"/>
    <property type="match status" value="1"/>
</dbReference>
<dbReference type="InterPro" id="IPR003593">
    <property type="entry name" value="AAA+_ATPase"/>
</dbReference>
<dbReference type="InterPro" id="IPR008921">
    <property type="entry name" value="DNA_pol3_clamp-load_cplx_C"/>
</dbReference>
<dbReference type="InterPro" id="IPR050238">
    <property type="entry name" value="DNA_Rep/Repair_Clamp_Loader"/>
</dbReference>
<dbReference type="InterPro" id="IPR027417">
    <property type="entry name" value="P-loop_NTPase"/>
</dbReference>
<dbReference type="PANTHER" id="PTHR11669">
    <property type="entry name" value="REPLICATION FACTOR C / DNA POLYMERASE III GAMMA-TAU SUBUNIT"/>
    <property type="match status" value="1"/>
</dbReference>
<dbReference type="PANTHER" id="PTHR11669:SF1">
    <property type="entry name" value="REPLICATION FACTOR C SUBUNIT 3"/>
    <property type="match status" value="1"/>
</dbReference>
<dbReference type="Pfam" id="PF13177">
    <property type="entry name" value="DNA_pol3_delta2"/>
    <property type="match status" value="1"/>
</dbReference>
<dbReference type="Pfam" id="PF21960">
    <property type="entry name" value="RCF1-5-like_lid"/>
    <property type="match status" value="1"/>
</dbReference>
<dbReference type="Pfam" id="PF22534">
    <property type="entry name" value="RFC_C"/>
    <property type="match status" value="1"/>
</dbReference>
<dbReference type="SMART" id="SM00382">
    <property type="entry name" value="AAA"/>
    <property type="match status" value="1"/>
</dbReference>
<dbReference type="SUPFAM" id="SSF52540">
    <property type="entry name" value="P-loop containing nucleoside triphosphate hydrolases"/>
    <property type="match status" value="1"/>
</dbReference>
<dbReference type="SUPFAM" id="SSF48019">
    <property type="entry name" value="post-AAA+ oligomerization domain-like"/>
    <property type="match status" value="1"/>
</dbReference>
<evidence type="ECO:0000250" key="1"/>
<evidence type="ECO:0000305" key="2"/>
<keyword id="KW-0235">DNA replication</keyword>
<keyword id="KW-0238">DNA-binding</keyword>
<keyword id="KW-0539">Nucleus</keyword>
<keyword id="KW-1185">Reference proteome</keyword>